<reference key="1">
    <citation type="journal article" date="2011" name="Stand. Genomic Sci.">
        <title>Complete genome sequence of the halophilic and highly halotolerant Chromohalobacter salexigens type strain (1H11(T)).</title>
        <authorList>
            <person name="Copeland A."/>
            <person name="O'Connor K."/>
            <person name="Lucas S."/>
            <person name="Lapidus A."/>
            <person name="Berry K.W."/>
            <person name="Detter J.C."/>
            <person name="Del Rio T.G."/>
            <person name="Hammon N."/>
            <person name="Dalin E."/>
            <person name="Tice H."/>
            <person name="Pitluck S."/>
            <person name="Bruce D."/>
            <person name="Goodwin L."/>
            <person name="Han C."/>
            <person name="Tapia R."/>
            <person name="Saunders E."/>
            <person name="Schmutz J."/>
            <person name="Brettin T."/>
            <person name="Larimer F."/>
            <person name="Land M."/>
            <person name="Hauser L."/>
            <person name="Vargas C."/>
            <person name="Nieto J.J."/>
            <person name="Kyrpides N.C."/>
            <person name="Ivanova N."/>
            <person name="Goker M."/>
            <person name="Klenk H.P."/>
            <person name="Csonka L.N."/>
            <person name="Woyke T."/>
        </authorList>
    </citation>
    <scope>NUCLEOTIDE SEQUENCE [LARGE SCALE GENOMIC DNA]</scope>
    <source>
        <strain>ATCC BAA-138 / DSM 3043 / CIP 106854 / NCIMB 13768 / 1H11</strain>
    </source>
</reference>
<accession>Q1QXB1</accession>
<proteinExistence type="inferred from homology"/>
<evidence type="ECO:0000255" key="1">
    <source>
        <dbReference type="HAMAP-Rule" id="MF_00658"/>
    </source>
</evidence>
<feature type="chain" id="PRO_0000260544" description="Ribosomal RNA large subunit methyltransferase H">
    <location>
        <begin position="1"/>
        <end position="155"/>
    </location>
</feature>
<feature type="binding site" evidence="1">
    <location>
        <position position="73"/>
    </location>
    <ligand>
        <name>S-adenosyl-L-methionine</name>
        <dbReference type="ChEBI" id="CHEBI:59789"/>
    </ligand>
</feature>
<feature type="binding site" evidence="1">
    <location>
        <position position="104"/>
    </location>
    <ligand>
        <name>S-adenosyl-L-methionine</name>
        <dbReference type="ChEBI" id="CHEBI:59789"/>
    </ligand>
</feature>
<feature type="binding site" evidence="1">
    <location>
        <begin position="123"/>
        <end position="128"/>
    </location>
    <ligand>
        <name>S-adenosyl-L-methionine</name>
        <dbReference type="ChEBI" id="CHEBI:59789"/>
    </ligand>
</feature>
<name>RLMH_CHRSD</name>
<protein>
    <recommendedName>
        <fullName evidence="1">Ribosomal RNA large subunit methyltransferase H</fullName>
        <ecNumber evidence="1">2.1.1.177</ecNumber>
    </recommendedName>
    <alternativeName>
        <fullName evidence="1">23S rRNA (pseudouridine1915-N3)-methyltransferase</fullName>
    </alternativeName>
    <alternativeName>
        <fullName evidence="1">23S rRNA m3Psi1915 methyltransferase</fullName>
    </alternativeName>
    <alternativeName>
        <fullName evidence="1">rRNA (pseudouridine-N3-)-methyltransferase RlmH</fullName>
    </alternativeName>
</protein>
<sequence length="155" mass="17482">MKLRVLAVGTRMPDWVTRGVDEYLKRLPRDFSVEIVEIAPGKRGKNADVARAIQGEGNAMLAKLRDQERVIALAVDGQHWSTERLAANADHWRQDGRDVALLVGGPDGLDPRLLSRVEQRWSLSALTLPHPLVRILLAEQLYRAWTLLAGHPYHR</sequence>
<gene>
    <name evidence="1" type="primary">rlmH</name>
    <name type="ordered locus">Csal_1544</name>
</gene>
<comment type="function">
    <text evidence="1">Specifically methylates the pseudouridine at position 1915 (m3Psi1915) in 23S rRNA.</text>
</comment>
<comment type="catalytic activity">
    <reaction evidence="1">
        <text>pseudouridine(1915) in 23S rRNA + S-adenosyl-L-methionine = N(3)-methylpseudouridine(1915) in 23S rRNA + S-adenosyl-L-homocysteine + H(+)</text>
        <dbReference type="Rhea" id="RHEA:42752"/>
        <dbReference type="Rhea" id="RHEA-COMP:10221"/>
        <dbReference type="Rhea" id="RHEA-COMP:10222"/>
        <dbReference type="ChEBI" id="CHEBI:15378"/>
        <dbReference type="ChEBI" id="CHEBI:57856"/>
        <dbReference type="ChEBI" id="CHEBI:59789"/>
        <dbReference type="ChEBI" id="CHEBI:65314"/>
        <dbReference type="ChEBI" id="CHEBI:74486"/>
        <dbReference type="EC" id="2.1.1.177"/>
    </reaction>
</comment>
<comment type="subunit">
    <text evidence="1">Homodimer.</text>
</comment>
<comment type="subcellular location">
    <subcellularLocation>
        <location evidence="1">Cytoplasm</location>
    </subcellularLocation>
</comment>
<comment type="similarity">
    <text evidence="1">Belongs to the RNA methyltransferase RlmH family.</text>
</comment>
<keyword id="KW-0963">Cytoplasm</keyword>
<keyword id="KW-0489">Methyltransferase</keyword>
<keyword id="KW-1185">Reference proteome</keyword>
<keyword id="KW-0698">rRNA processing</keyword>
<keyword id="KW-0949">S-adenosyl-L-methionine</keyword>
<keyword id="KW-0808">Transferase</keyword>
<dbReference type="EC" id="2.1.1.177" evidence="1"/>
<dbReference type="EMBL" id="CP000285">
    <property type="protein sequence ID" value="ABE58897.1"/>
    <property type="molecule type" value="Genomic_DNA"/>
</dbReference>
<dbReference type="RefSeq" id="WP_011506843.1">
    <property type="nucleotide sequence ID" value="NC_007963.1"/>
</dbReference>
<dbReference type="SMR" id="Q1QXB1"/>
<dbReference type="STRING" id="290398.Csal_1544"/>
<dbReference type="GeneID" id="95334275"/>
<dbReference type="KEGG" id="csa:Csal_1544"/>
<dbReference type="eggNOG" id="COG1576">
    <property type="taxonomic scope" value="Bacteria"/>
</dbReference>
<dbReference type="HOGENOM" id="CLU_100552_1_0_6"/>
<dbReference type="OrthoDB" id="9806643at2"/>
<dbReference type="Proteomes" id="UP000000239">
    <property type="component" value="Chromosome"/>
</dbReference>
<dbReference type="GO" id="GO:0005737">
    <property type="term" value="C:cytoplasm"/>
    <property type="evidence" value="ECO:0007669"/>
    <property type="project" value="UniProtKB-SubCell"/>
</dbReference>
<dbReference type="GO" id="GO:0070038">
    <property type="term" value="F:rRNA (pseudouridine-N3-)-methyltransferase activity"/>
    <property type="evidence" value="ECO:0007669"/>
    <property type="project" value="UniProtKB-UniRule"/>
</dbReference>
<dbReference type="CDD" id="cd18081">
    <property type="entry name" value="RlmH-like"/>
    <property type="match status" value="1"/>
</dbReference>
<dbReference type="Gene3D" id="3.40.1280.10">
    <property type="match status" value="1"/>
</dbReference>
<dbReference type="HAMAP" id="MF_00658">
    <property type="entry name" value="23SrRNA_methyltr_H"/>
    <property type="match status" value="1"/>
</dbReference>
<dbReference type="InterPro" id="IPR029028">
    <property type="entry name" value="Alpha/beta_knot_MTases"/>
</dbReference>
<dbReference type="InterPro" id="IPR003742">
    <property type="entry name" value="RlmH-like"/>
</dbReference>
<dbReference type="InterPro" id="IPR029026">
    <property type="entry name" value="tRNA_m1G_MTases_N"/>
</dbReference>
<dbReference type="NCBIfam" id="NF000986">
    <property type="entry name" value="PRK00103.1-4"/>
    <property type="match status" value="1"/>
</dbReference>
<dbReference type="NCBIfam" id="TIGR00246">
    <property type="entry name" value="tRNA_RlmH_YbeA"/>
    <property type="match status" value="1"/>
</dbReference>
<dbReference type="PANTHER" id="PTHR33603">
    <property type="entry name" value="METHYLTRANSFERASE"/>
    <property type="match status" value="1"/>
</dbReference>
<dbReference type="PANTHER" id="PTHR33603:SF1">
    <property type="entry name" value="RIBOSOMAL RNA LARGE SUBUNIT METHYLTRANSFERASE H"/>
    <property type="match status" value="1"/>
</dbReference>
<dbReference type="Pfam" id="PF02590">
    <property type="entry name" value="SPOUT_MTase"/>
    <property type="match status" value="1"/>
</dbReference>
<dbReference type="PIRSF" id="PIRSF004505">
    <property type="entry name" value="MT_bac"/>
    <property type="match status" value="1"/>
</dbReference>
<dbReference type="SUPFAM" id="SSF75217">
    <property type="entry name" value="alpha/beta knot"/>
    <property type="match status" value="1"/>
</dbReference>
<organism>
    <name type="scientific">Chromohalobacter salexigens (strain ATCC BAA-138 / DSM 3043 / CIP 106854 / NCIMB 13768 / 1H11)</name>
    <dbReference type="NCBI Taxonomy" id="290398"/>
    <lineage>
        <taxon>Bacteria</taxon>
        <taxon>Pseudomonadati</taxon>
        <taxon>Pseudomonadota</taxon>
        <taxon>Gammaproteobacteria</taxon>
        <taxon>Oceanospirillales</taxon>
        <taxon>Halomonadaceae</taxon>
        <taxon>Chromohalobacter</taxon>
    </lineage>
</organism>